<gene>
    <name type="ordered locus">SAV0746</name>
</gene>
<proteinExistence type="predicted"/>
<organism>
    <name type="scientific">Staphylococcus aureus (strain Mu50 / ATCC 700699)</name>
    <dbReference type="NCBI Taxonomy" id="158878"/>
    <lineage>
        <taxon>Bacteria</taxon>
        <taxon>Bacillati</taxon>
        <taxon>Bacillota</taxon>
        <taxon>Bacilli</taxon>
        <taxon>Bacillales</taxon>
        <taxon>Staphylococcaceae</taxon>
        <taxon>Staphylococcus</taxon>
    </lineage>
</organism>
<feature type="chain" id="PRO_0000286956" description="Uncharacterized membrane protein SAV0746">
    <location>
        <begin position="1"/>
        <end position="356"/>
    </location>
</feature>
<feature type="transmembrane region" description="Helical" evidence="1">
    <location>
        <begin position="2"/>
        <end position="22"/>
    </location>
</feature>
<feature type="transmembrane region" description="Helical" evidence="1">
    <location>
        <begin position="35"/>
        <end position="55"/>
    </location>
</feature>
<feature type="transmembrane region" description="Helical" evidence="1">
    <location>
        <begin position="74"/>
        <end position="94"/>
    </location>
</feature>
<feature type="transmembrane region" description="Helical" evidence="1">
    <location>
        <begin position="99"/>
        <end position="119"/>
    </location>
</feature>
<feature type="transmembrane region" description="Helical" evidence="1">
    <location>
        <begin position="124"/>
        <end position="144"/>
    </location>
</feature>
<feature type="transmembrane region" description="Helical" evidence="1">
    <location>
        <begin position="154"/>
        <end position="174"/>
    </location>
</feature>
<feature type="domain" description="GGDEF" evidence="2">
    <location>
        <begin position="218"/>
        <end position="353"/>
    </location>
</feature>
<comment type="subcellular location">
    <subcellularLocation>
        <location evidence="3">Cell membrane</location>
        <topology evidence="3">Multi-pass membrane protein</topology>
    </subcellularLocation>
</comment>
<accession>Q7A2V2</accession>
<name>Y746_STAAM</name>
<keyword id="KW-1003">Cell membrane</keyword>
<keyword id="KW-0472">Membrane</keyword>
<keyword id="KW-0812">Transmembrane</keyword>
<keyword id="KW-1133">Transmembrane helix</keyword>
<evidence type="ECO:0000255" key="1"/>
<evidence type="ECO:0000255" key="2">
    <source>
        <dbReference type="PROSITE-ProRule" id="PRU00095"/>
    </source>
</evidence>
<evidence type="ECO:0000305" key="3"/>
<protein>
    <recommendedName>
        <fullName>Uncharacterized membrane protein SAV0746</fullName>
    </recommendedName>
</protein>
<dbReference type="EMBL" id="BA000017">
    <property type="protein sequence ID" value="BAB56908.1"/>
    <property type="molecule type" value="Genomic_DNA"/>
</dbReference>
<dbReference type="SMR" id="Q7A2V2"/>
<dbReference type="KEGG" id="sav:SAV0746"/>
<dbReference type="HOGENOM" id="CLU_000445_11_1_9"/>
<dbReference type="PhylomeDB" id="Q7A2V2"/>
<dbReference type="Proteomes" id="UP000002481">
    <property type="component" value="Chromosome"/>
</dbReference>
<dbReference type="GO" id="GO:0005886">
    <property type="term" value="C:plasma membrane"/>
    <property type="evidence" value="ECO:0007669"/>
    <property type="project" value="UniProtKB-SubCell"/>
</dbReference>
<dbReference type="GO" id="GO:0052621">
    <property type="term" value="F:diguanylate cyclase activity"/>
    <property type="evidence" value="ECO:0007669"/>
    <property type="project" value="TreeGrafter"/>
</dbReference>
<dbReference type="GO" id="GO:0000155">
    <property type="term" value="F:phosphorelay sensor kinase activity"/>
    <property type="evidence" value="ECO:0007669"/>
    <property type="project" value="InterPro"/>
</dbReference>
<dbReference type="GO" id="GO:0043709">
    <property type="term" value="P:cell adhesion involved in single-species biofilm formation"/>
    <property type="evidence" value="ECO:0007669"/>
    <property type="project" value="TreeGrafter"/>
</dbReference>
<dbReference type="GO" id="GO:0071555">
    <property type="term" value="P:cell wall organization"/>
    <property type="evidence" value="ECO:0007669"/>
    <property type="project" value="InterPro"/>
</dbReference>
<dbReference type="GO" id="GO:1902201">
    <property type="term" value="P:negative regulation of bacterial-type flagellum-dependent cell motility"/>
    <property type="evidence" value="ECO:0007669"/>
    <property type="project" value="TreeGrafter"/>
</dbReference>
<dbReference type="CDD" id="cd01949">
    <property type="entry name" value="GGDEF"/>
    <property type="match status" value="1"/>
</dbReference>
<dbReference type="FunFam" id="3.30.70.270:FF:000038">
    <property type="entry name" value="Diguanylate cyclase domain protein"/>
    <property type="match status" value="1"/>
</dbReference>
<dbReference type="Gene3D" id="3.30.70.270">
    <property type="match status" value="1"/>
</dbReference>
<dbReference type="InterPro" id="IPR050469">
    <property type="entry name" value="Diguanylate_Cyclase"/>
</dbReference>
<dbReference type="InterPro" id="IPR000160">
    <property type="entry name" value="GGDEF_dom"/>
</dbReference>
<dbReference type="InterPro" id="IPR029787">
    <property type="entry name" value="Nucleotide_cyclase"/>
</dbReference>
<dbReference type="InterPro" id="IPR043128">
    <property type="entry name" value="Rev_trsase/Diguanyl_cyclase"/>
</dbReference>
<dbReference type="InterPro" id="IPR011620">
    <property type="entry name" value="Sig_transdc_His_kinase_LytS_TM"/>
</dbReference>
<dbReference type="NCBIfam" id="TIGR00254">
    <property type="entry name" value="GGDEF"/>
    <property type="match status" value="1"/>
</dbReference>
<dbReference type="PANTHER" id="PTHR45138:SF9">
    <property type="entry name" value="DIGUANYLATE CYCLASE DGCM-RELATED"/>
    <property type="match status" value="1"/>
</dbReference>
<dbReference type="PANTHER" id="PTHR45138">
    <property type="entry name" value="REGULATORY COMPONENTS OF SENSORY TRANSDUCTION SYSTEM"/>
    <property type="match status" value="1"/>
</dbReference>
<dbReference type="Pfam" id="PF07694">
    <property type="entry name" value="5TM-5TMR_LYT"/>
    <property type="match status" value="1"/>
</dbReference>
<dbReference type="Pfam" id="PF00990">
    <property type="entry name" value="GGDEF"/>
    <property type="match status" value="1"/>
</dbReference>
<dbReference type="SMART" id="SM00267">
    <property type="entry name" value="GGDEF"/>
    <property type="match status" value="1"/>
</dbReference>
<dbReference type="SUPFAM" id="SSF55073">
    <property type="entry name" value="Nucleotide cyclase"/>
    <property type="match status" value="1"/>
</dbReference>
<dbReference type="PROSITE" id="PS50887">
    <property type="entry name" value="GGDEF"/>
    <property type="match status" value="1"/>
</dbReference>
<sequence length="356" mass="40345">MFEAFIYNISVIVAGIYLFHRLQYSENKRMVFSKAYVTVLMTIVSLLLSVYPIPYREDYLIHLTFVPLLFLGRFTNMVYTLSATVIVAIVEIVVFNNSIMYGVTLIVIAAVTSAIGPFLKQNDVLSLLILNVVTIIILFGVALVSPIYTLSEVIILIPISLIITLASAITFVDIWHFFSLVNRYENEDKYDYLTGLGNVKEFDRHLNEISRKAEKEHQSIALLLIDIDGFKDVNDTYSHKSGDAVLKQMSQLLKNYVPNQFKIFRNGGEEFSVVIHNYSLDQSVKLAENIRSGVEKSSFHLPNKEVIKLSVSIGVGYLTDDDPKSQRKVFKDADDMVHVAKNQGRNKVMFNPIINL</sequence>
<reference key="1">
    <citation type="journal article" date="2001" name="Lancet">
        <title>Whole genome sequencing of meticillin-resistant Staphylococcus aureus.</title>
        <authorList>
            <person name="Kuroda M."/>
            <person name="Ohta T."/>
            <person name="Uchiyama I."/>
            <person name="Baba T."/>
            <person name="Yuzawa H."/>
            <person name="Kobayashi I."/>
            <person name="Cui L."/>
            <person name="Oguchi A."/>
            <person name="Aoki K."/>
            <person name="Nagai Y."/>
            <person name="Lian J.-Q."/>
            <person name="Ito T."/>
            <person name="Kanamori M."/>
            <person name="Matsumaru H."/>
            <person name="Maruyama A."/>
            <person name="Murakami H."/>
            <person name="Hosoyama A."/>
            <person name="Mizutani-Ui Y."/>
            <person name="Takahashi N.K."/>
            <person name="Sawano T."/>
            <person name="Inoue R."/>
            <person name="Kaito C."/>
            <person name="Sekimizu K."/>
            <person name="Hirakawa H."/>
            <person name="Kuhara S."/>
            <person name="Goto S."/>
            <person name="Yabuzaki J."/>
            <person name="Kanehisa M."/>
            <person name="Yamashita A."/>
            <person name="Oshima K."/>
            <person name="Furuya K."/>
            <person name="Yoshino C."/>
            <person name="Shiba T."/>
            <person name="Hattori M."/>
            <person name="Ogasawara N."/>
            <person name="Hayashi H."/>
            <person name="Hiramatsu K."/>
        </authorList>
    </citation>
    <scope>NUCLEOTIDE SEQUENCE [LARGE SCALE GENOMIC DNA]</scope>
    <source>
        <strain>Mu50 / ATCC 700699</strain>
    </source>
</reference>